<dbReference type="EMBL" id="U00089">
    <property type="protein sequence ID" value="AAB95996.1"/>
    <property type="molecule type" value="Genomic_DNA"/>
</dbReference>
<dbReference type="PIR" id="S73674">
    <property type="entry name" value="S73674"/>
</dbReference>
<dbReference type="RefSeq" id="NP_110182.1">
    <property type="nucleotide sequence ID" value="NC_000912.1"/>
</dbReference>
<dbReference type="RefSeq" id="WP_010874850.1">
    <property type="nucleotide sequence ID" value="NZ_OU342337.1"/>
</dbReference>
<dbReference type="SMR" id="P75292"/>
<dbReference type="STRING" id="272634.MPN_494"/>
<dbReference type="EnsemblBacteria" id="AAB95996">
    <property type="protein sequence ID" value="AAB95996"/>
    <property type="gene ID" value="MPN_494"/>
</dbReference>
<dbReference type="KEGG" id="mpn:MPN_494"/>
<dbReference type="PATRIC" id="fig|272634.6.peg.534"/>
<dbReference type="HOGENOM" id="CLU_072531_2_0_14"/>
<dbReference type="OrthoDB" id="369398at2"/>
<dbReference type="BioCyc" id="MPNE272634:G1GJ3-811-MONOMER"/>
<dbReference type="Proteomes" id="UP000000808">
    <property type="component" value="Chromosome"/>
</dbReference>
<dbReference type="GO" id="GO:0005737">
    <property type="term" value="C:cytoplasm"/>
    <property type="evidence" value="ECO:0007669"/>
    <property type="project" value="UniProtKB-SubCell"/>
</dbReference>
<dbReference type="GO" id="GO:0016301">
    <property type="term" value="F:kinase activity"/>
    <property type="evidence" value="ECO:0007669"/>
    <property type="project" value="UniProtKB-KW"/>
</dbReference>
<dbReference type="GO" id="GO:0009401">
    <property type="term" value="P:phosphoenolpyruvate-dependent sugar phosphotransferase system"/>
    <property type="evidence" value="ECO:0007669"/>
    <property type="project" value="UniProtKB-KW"/>
</dbReference>
<dbReference type="CDD" id="cd00211">
    <property type="entry name" value="PTS_IIA_fru"/>
    <property type="match status" value="1"/>
</dbReference>
<dbReference type="Gene3D" id="3.40.930.10">
    <property type="entry name" value="Mannitol-specific EII, Chain A"/>
    <property type="match status" value="1"/>
</dbReference>
<dbReference type="InterPro" id="IPR051351">
    <property type="entry name" value="Ascorbate-PTS_EIIA_comp"/>
</dbReference>
<dbReference type="InterPro" id="IPR016152">
    <property type="entry name" value="PTrfase/Anion_transptr"/>
</dbReference>
<dbReference type="InterPro" id="IPR002178">
    <property type="entry name" value="PTS_EIIA_type-2_dom"/>
</dbReference>
<dbReference type="PANTHER" id="PTHR36203">
    <property type="entry name" value="ASCORBATE-SPECIFIC PTS SYSTEM EIIA COMPONENT"/>
    <property type="match status" value="1"/>
</dbReference>
<dbReference type="PANTHER" id="PTHR36203:SF3">
    <property type="entry name" value="PHOSPHOTRANSFERASE IIA COMPONENT SGCA-RELATED"/>
    <property type="match status" value="1"/>
</dbReference>
<dbReference type="Pfam" id="PF00359">
    <property type="entry name" value="PTS_EIIA_2"/>
    <property type="match status" value="1"/>
</dbReference>
<dbReference type="SUPFAM" id="SSF55804">
    <property type="entry name" value="Phoshotransferase/anion transport protein"/>
    <property type="match status" value="1"/>
</dbReference>
<dbReference type="PROSITE" id="PS51094">
    <property type="entry name" value="PTS_EIIA_TYPE_2"/>
    <property type="match status" value="1"/>
</dbReference>
<dbReference type="PROSITE" id="PS00372">
    <property type="entry name" value="PTS_EIIA_TYPE_2_HIS"/>
    <property type="match status" value="1"/>
</dbReference>
<evidence type="ECO:0000250" key="1">
    <source>
        <dbReference type="UniProtKB" id="P69820"/>
    </source>
</evidence>
<evidence type="ECO:0000255" key="2">
    <source>
        <dbReference type="PROSITE-ProRule" id="PRU00417"/>
    </source>
</evidence>
<evidence type="ECO:0000305" key="3"/>
<reference key="1">
    <citation type="journal article" date="1996" name="Nucleic Acids Res.">
        <title>Complete sequence analysis of the genome of the bacterium Mycoplasma pneumoniae.</title>
        <authorList>
            <person name="Himmelreich R."/>
            <person name="Hilbert H."/>
            <person name="Plagens H."/>
            <person name="Pirkl E."/>
            <person name="Li B.-C."/>
            <person name="Herrmann R."/>
        </authorList>
    </citation>
    <scope>NUCLEOTIDE SEQUENCE [LARGE SCALE GENOMIC DNA]</scope>
    <source>
        <strain>ATCC 29342 / M129 / Subtype 1</strain>
    </source>
</reference>
<name>ULAC_MYCPN</name>
<proteinExistence type="inferred from homology"/>
<gene>
    <name type="primary">ulaC</name>
    <name type="synonym">sgaA</name>
    <name type="ordered locus">MPN_494</name>
    <name type="ORF">MP348</name>
</gene>
<accession>P75292</accession>
<sequence length="159" mass="17808">MTKLDFKAVLKQHHTVRLHQTAQDWKQAIQLCIHPLIAAKLVQPAYFDDILKSVAQYGPYFIIAENVAMPHAQNNGTVQQNCFSLVTLKEPVYFDNDPRPVRLLIGLAATSAAIHTTEALPQIAALVEDTQVVKDLLDCCDETSLFAVIDRVNLHKYLT</sequence>
<organism>
    <name type="scientific">Mycoplasma pneumoniae (strain ATCC 29342 / M129 / Subtype 1)</name>
    <name type="common">Mycoplasmoides pneumoniae</name>
    <dbReference type="NCBI Taxonomy" id="272634"/>
    <lineage>
        <taxon>Bacteria</taxon>
        <taxon>Bacillati</taxon>
        <taxon>Mycoplasmatota</taxon>
        <taxon>Mycoplasmoidales</taxon>
        <taxon>Mycoplasmoidaceae</taxon>
        <taxon>Mycoplasmoides</taxon>
    </lineage>
</organism>
<comment type="function">
    <text evidence="1">The phosphoenolpyruvate-dependent sugar phosphotransferase system (sugar PTS), a major carbohydrate active transport system, catalyzes the phosphorylation of incoming sugar substrates concomitantly with their translocation across the cell membrane. The enzyme II UlaABC PTS system is involved in ascorbate transport.</text>
</comment>
<comment type="subcellular location">
    <subcellularLocation>
        <location evidence="3">Cytoplasm</location>
    </subcellularLocation>
</comment>
<comment type="domain">
    <text evidence="2">The PTS EIIA type-2 domain is phosphorylated by phospho-HPr on a histidyl residue. Then, it transfers the phosphoryl group to the PTS EIIB type-2 domain.</text>
</comment>
<protein>
    <recommendedName>
        <fullName evidence="1">Ascorbate-specific PTS system EIIA component</fullName>
    </recommendedName>
    <alternativeName>
        <fullName evidence="1">Ascorbate-specific phosphotransferase enzyme IIA component</fullName>
    </alternativeName>
</protein>
<feature type="chain" id="PRO_0000186685" description="Ascorbate-specific PTS system EIIA component">
    <location>
        <begin position="1"/>
        <end position="159"/>
    </location>
</feature>
<feature type="domain" description="PTS EIIA type-2" evidence="2">
    <location>
        <begin position="9"/>
        <end position="152"/>
    </location>
</feature>
<feature type="active site" description="Tele-phosphohistidine intermediate" evidence="2">
    <location>
        <position position="71"/>
    </location>
</feature>
<feature type="modified residue" description="Phosphohistidine" evidence="1">
    <location>
        <position position="71"/>
    </location>
</feature>
<keyword id="KW-0963">Cytoplasm</keyword>
<keyword id="KW-0418">Kinase</keyword>
<keyword id="KW-0597">Phosphoprotein</keyword>
<keyword id="KW-0598">Phosphotransferase system</keyword>
<keyword id="KW-1185">Reference proteome</keyword>
<keyword id="KW-0808">Transferase</keyword>
<keyword id="KW-0813">Transport</keyword>